<organism>
    <name type="scientific">Legionella pneumophila (strain Corby)</name>
    <dbReference type="NCBI Taxonomy" id="400673"/>
    <lineage>
        <taxon>Bacteria</taxon>
        <taxon>Pseudomonadati</taxon>
        <taxon>Pseudomonadota</taxon>
        <taxon>Gammaproteobacteria</taxon>
        <taxon>Legionellales</taxon>
        <taxon>Legionellaceae</taxon>
        <taxon>Legionella</taxon>
    </lineage>
</organism>
<proteinExistence type="inferred from homology"/>
<evidence type="ECO:0000255" key="1">
    <source>
        <dbReference type="HAMAP-Rule" id="MF_00272"/>
    </source>
</evidence>
<evidence type="ECO:0000255" key="2">
    <source>
        <dbReference type="PROSITE-ProRule" id="PRU01066"/>
    </source>
</evidence>
<reference key="1">
    <citation type="submission" date="2006-11" db="EMBL/GenBank/DDBJ databases">
        <title>Identification and characterization of a new conjugation/ type IVA secretion system (trb/tra) of L. pneumophila Corby localized on a mobile genomic island.</title>
        <authorList>
            <person name="Gloeckner G."/>
            <person name="Albert-Weissenberger C."/>
            <person name="Weinmann E."/>
            <person name="Jacobi S."/>
            <person name="Schunder E."/>
            <person name="Steinert M."/>
            <person name="Buchrieser C."/>
            <person name="Hacker J."/>
            <person name="Heuner K."/>
        </authorList>
    </citation>
    <scope>NUCLEOTIDE SEQUENCE [LARGE SCALE GENOMIC DNA]</scope>
    <source>
        <strain>Corby</strain>
    </source>
</reference>
<accession>A5I9T6</accession>
<name>GCSH_LEGPC</name>
<feature type="chain" id="PRO_1000059183" description="Glycine cleavage system H protein">
    <location>
        <begin position="1"/>
        <end position="125"/>
    </location>
</feature>
<feature type="domain" description="Lipoyl-binding" evidence="2">
    <location>
        <begin position="19"/>
        <end position="101"/>
    </location>
</feature>
<feature type="modified residue" description="N6-lipoyllysine" evidence="1">
    <location>
        <position position="60"/>
    </location>
</feature>
<keyword id="KW-0450">Lipoyl</keyword>
<sequence length="125" mass="13845">MNDLKFTTTHEWLREDEEEVTVGITDHAQELLGDMVFVELPEIGDEVSAGQELGVVESVKAASDFYAPISGVVTAVNEAVGKNPALVNHDPYHEGWLVKLKPSHPDEIKSLLSDEQYQNEIAEEN</sequence>
<dbReference type="EMBL" id="CP000675">
    <property type="protein sequence ID" value="ABQ54136.1"/>
    <property type="molecule type" value="Genomic_DNA"/>
</dbReference>
<dbReference type="RefSeq" id="WP_010945878.1">
    <property type="nucleotide sequence ID" value="NZ_JAPMSS010000003.1"/>
</dbReference>
<dbReference type="SMR" id="A5I9T6"/>
<dbReference type="GeneID" id="57034124"/>
<dbReference type="KEGG" id="lpc:LPC_0137"/>
<dbReference type="HOGENOM" id="CLU_097408_2_0_6"/>
<dbReference type="GO" id="GO:0005829">
    <property type="term" value="C:cytosol"/>
    <property type="evidence" value="ECO:0007669"/>
    <property type="project" value="TreeGrafter"/>
</dbReference>
<dbReference type="GO" id="GO:0005960">
    <property type="term" value="C:glycine cleavage complex"/>
    <property type="evidence" value="ECO:0007669"/>
    <property type="project" value="InterPro"/>
</dbReference>
<dbReference type="GO" id="GO:0019464">
    <property type="term" value="P:glycine decarboxylation via glycine cleavage system"/>
    <property type="evidence" value="ECO:0007669"/>
    <property type="project" value="UniProtKB-UniRule"/>
</dbReference>
<dbReference type="CDD" id="cd06848">
    <property type="entry name" value="GCS_H"/>
    <property type="match status" value="1"/>
</dbReference>
<dbReference type="Gene3D" id="2.40.50.100">
    <property type="match status" value="1"/>
</dbReference>
<dbReference type="HAMAP" id="MF_00272">
    <property type="entry name" value="GcvH"/>
    <property type="match status" value="1"/>
</dbReference>
<dbReference type="InterPro" id="IPR003016">
    <property type="entry name" value="2-oxoA_DH_lipoyl-BS"/>
</dbReference>
<dbReference type="InterPro" id="IPR000089">
    <property type="entry name" value="Biotin_lipoyl"/>
</dbReference>
<dbReference type="InterPro" id="IPR002930">
    <property type="entry name" value="GCV_H"/>
</dbReference>
<dbReference type="InterPro" id="IPR033753">
    <property type="entry name" value="GCV_H/Fam206"/>
</dbReference>
<dbReference type="InterPro" id="IPR017453">
    <property type="entry name" value="GCV_H_sub"/>
</dbReference>
<dbReference type="InterPro" id="IPR011053">
    <property type="entry name" value="Single_hybrid_motif"/>
</dbReference>
<dbReference type="NCBIfam" id="TIGR00527">
    <property type="entry name" value="gcvH"/>
    <property type="match status" value="1"/>
</dbReference>
<dbReference type="NCBIfam" id="NF002270">
    <property type="entry name" value="PRK01202.1"/>
    <property type="match status" value="1"/>
</dbReference>
<dbReference type="PANTHER" id="PTHR11715">
    <property type="entry name" value="GLYCINE CLEAVAGE SYSTEM H PROTEIN"/>
    <property type="match status" value="1"/>
</dbReference>
<dbReference type="PANTHER" id="PTHR11715:SF3">
    <property type="entry name" value="GLYCINE CLEAVAGE SYSTEM H PROTEIN-RELATED"/>
    <property type="match status" value="1"/>
</dbReference>
<dbReference type="Pfam" id="PF01597">
    <property type="entry name" value="GCV_H"/>
    <property type="match status" value="1"/>
</dbReference>
<dbReference type="SUPFAM" id="SSF51230">
    <property type="entry name" value="Single hybrid motif"/>
    <property type="match status" value="1"/>
</dbReference>
<dbReference type="PROSITE" id="PS50968">
    <property type="entry name" value="BIOTINYL_LIPOYL"/>
    <property type="match status" value="1"/>
</dbReference>
<dbReference type="PROSITE" id="PS00189">
    <property type="entry name" value="LIPOYL"/>
    <property type="match status" value="1"/>
</dbReference>
<comment type="function">
    <text evidence="1">The glycine cleavage system catalyzes the degradation of glycine. The H protein shuttles the methylamine group of glycine from the P protein to the T protein.</text>
</comment>
<comment type="cofactor">
    <cofactor evidence="1">
        <name>(R)-lipoate</name>
        <dbReference type="ChEBI" id="CHEBI:83088"/>
    </cofactor>
    <text evidence="1">Binds 1 lipoyl cofactor covalently.</text>
</comment>
<comment type="subunit">
    <text evidence="1">The glycine cleavage system is composed of four proteins: P, T, L and H.</text>
</comment>
<comment type="similarity">
    <text evidence="1">Belongs to the GcvH family.</text>
</comment>
<protein>
    <recommendedName>
        <fullName evidence="1">Glycine cleavage system H protein</fullName>
    </recommendedName>
</protein>
<gene>
    <name evidence="1" type="primary">gcvH</name>
    <name type="ordered locus">LPC_0137</name>
</gene>